<organism>
    <name type="scientific">Paraburkholderia phymatum (strain DSM 17167 / CIP 108236 / LMG 21445 / STM815)</name>
    <name type="common">Burkholderia phymatum</name>
    <dbReference type="NCBI Taxonomy" id="391038"/>
    <lineage>
        <taxon>Bacteria</taxon>
        <taxon>Pseudomonadati</taxon>
        <taxon>Pseudomonadota</taxon>
        <taxon>Betaproteobacteria</taxon>
        <taxon>Burkholderiales</taxon>
        <taxon>Burkholderiaceae</taxon>
        <taxon>Paraburkholderia</taxon>
    </lineage>
</organism>
<dbReference type="EMBL" id="CP001043">
    <property type="protein sequence ID" value="ACC70519.1"/>
    <property type="molecule type" value="Genomic_DNA"/>
</dbReference>
<dbReference type="RefSeq" id="WP_012400733.1">
    <property type="nucleotide sequence ID" value="NC_010622.1"/>
</dbReference>
<dbReference type="SMR" id="B2JIC5"/>
<dbReference type="STRING" id="391038.Bphy_1337"/>
<dbReference type="KEGG" id="bph:Bphy_1337"/>
<dbReference type="eggNOG" id="COG0264">
    <property type="taxonomic scope" value="Bacteria"/>
</dbReference>
<dbReference type="HOGENOM" id="CLU_047155_0_2_4"/>
<dbReference type="OrthoDB" id="9808348at2"/>
<dbReference type="Proteomes" id="UP000001192">
    <property type="component" value="Chromosome 1"/>
</dbReference>
<dbReference type="GO" id="GO:0005737">
    <property type="term" value="C:cytoplasm"/>
    <property type="evidence" value="ECO:0007669"/>
    <property type="project" value="UniProtKB-SubCell"/>
</dbReference>
<dbReference type="GO" id="GO:0003746">
    <property type="term" value="F:translation elongation factor activity"/>
    <property type="evidence" value="ECO:0007669"/>
    <property type="project" value="UniProtKB-UniRule"/>
</dbReference>
<dbReference type="CDD" id="cd14275">
    <property type="entry name" value="UBA_EF-Ts"/>
    <property type="match status" value="1"/>
</dbReference>
<dbReference type="FunFam" id="1.10.286.20:FF:000001">
    <property type="entry name" value="Elongation factor Ts"/>
    <property type="match status" value="1"/>
</dbReference>
<dbReference type="FunFam" id="1.10.8.10:FF:000001">
    <property type="entry name" value="Elongation factor Ts"/>
    <property type="match status" value="1"/>
</dbReference>
<dbReference type="Gene3D" id="1.10.286.20">
    <property type="match status" value="1"/>
</dbReference>
<dbReference type="Gene3D" id="1.10.8.10">
    <property type="entry name" value="DNA helicase RuvA subunit, C-terminal domain"/>
    <property type="match status" value="1"/>
</dbReference>
<dbReference type="Gene3D" id="3.30.479.20">
    <property type="entry name" value="Elongation factor Ts, dimerisation domain"/>
    <property type="match status" value="2"/>
</dbReference>
<dbReference type="HAMAP" id="MF_00050">
    <property type="entry name" value="EF_Ts"/>
    <property type="match status" value="1"/>
</dbReference>
<dbReference type="InterPro" id="IPR036402">
    <property type="entry name" value="EF-Ts_dimer_sf"/>
</dbReference>
<dbReference type="InterPro" id="IPR001816">
    <property type="entry name" value="Transl_elong_EFTs/EF1B"/>
</dbReference>
<dbReference type="InterPro" id="IPR014039">
    <property type="entry name" value="Transl_elong_EFTs/EF1B_dimer"/>
</dbReference>
<dbReference type="InterPro" id="IPR018101">
    <property type="entry name" value="Transl_elong_Ts_CS"/>
</dbReference>
<dbReference type="InterPro" id="IPR009060">
    <property type="entry name" value="UBA-like_sf"/>
</dbReference>
<dbReference type="NCBIfam" id="TIGR00116">
    <property type="entry name" value="tsf"/>
    <property type="match status" value="1"/>
</dbReference>
<dbReference type="PANTHER" id="PTHR11741">
    <property type="entry name" value="ELONGATION FACTOR TS"/>
    <property type="match status" value="1"/>
</dbReference>
<dbReference type="PANTHER" id="PTHR11741:SF0">
    <property type="entry name" value="ELONGATION FACTOR TS, MITOCHONDRIAL"/>
    <property type="match status" value="1"/>
</dbReference>
<dbReference type="Pfam" id="PF00889">
    <property type="entry name" value="EF_TS"/>
    <property type="match status" value="1"/>
</dbReference>
<dbReference type="SUPFAM" id="SSF54713">
    <property type="entry name" value="Elongation factor Ts (EF-Ts), dimerisation domain"/>
    <property type="match status" value="2"/>
</dbReference>
<dbReference type="SUPFAM" id="SSF46934">
    <property type="entry name" value="UBA-like"/>
    <property type="match status" value="1"/>
</dbReference>
<dbReference type="PROSITE" id="PS01127">
    <property type="entry name" value="EF_TS_2"/>
    <property type="match status" value="1"/>
</dbReference>
<name>EFTS_PARP8</name>
<comment type="function">
    <text evidence="1">Associates with the EF-Tu.GDP complex and induces the exchange of GDP to GTP. It remains bound to the aminoacyl-tRNA.EF-Tu.GTP complex up to the GTP hydrolysis stage on the ribosome.</text>
</comment>
<comment type="subcellular location">
    <subcellularLocation>
        <location evidence="1">Cytoplasm</location>
    </subcellularLocation>
</comment>
<comment type="similarity">
    <text evidence="1">Belongs to the EF-Ts family.</text>
</comment>
<gene>
    <name evidence="1" type="primary">tsf</name>
    <name type="ordered locus">Bphy_1337</name>
</gene>
<evidence type="ECO:0000255" key="1">
    <source>
        <dbReference type="HAMAP-Rule" id="MF_00050"/>
    </source>
</evidence>
<keyword id="KW-0963">Cytoplasm</keyword>
<keyword id="KW-0251">Elongation factor</keyword>
<keyword id="KW-0648">Protein biosynthesis</keyword>
<keyword id="KW-1185">Reference proteome</keyword>
<protein>
    <recommendedName>
        <fullName evidence="1">Elongation factor Ts</fullName>
        <shortName evidence="1">EF-Ts</shortName>
    </recommendedName>
</protein>
<proteinExistence type="inferred from homology"/>
<sequence>MAAITASMVAELRAKTDAPMMECKKALTEADGDMARAEELLRVKLGNKASKAASRVTAEGVIASFIEGGAGAIVELNCETDFVSKNDDFIGFSKKVAELVVKQNPADVGALSALALDGSTVDAVRSALVGKIGENLSIRRFARFETSNKLAAYLHGTRIGVLVEYTGADEQVGKDVAMHIAAMKPVSLSSDDVPADLIAKERSIAEQKAAESGKPAEIVAKMVDGSVQKYLKEVSLLNQPFVKNDKQTIEQMLKAANASVQNFALFVVGEGIEKRQDDFAAEVAAQVAAAKQQ</sequence>
<reference key="1">
    <citation type="journal article" date="2014" name="Stand. Genomic Sci.">
        <title>Complete genome sequence of Burkholderia phymatum STM815(T), a broad host range and efficient nitrogen-fixing symbiont of Mimosa species.</title>
        <authorList>
            <person name="Moulin L."/>
            <person name="Klonowska A."/>
            <person name="Caroline B."/>
            <person name="Booth K."/>
            <person name="Vriezen J.A."/>
            <person name="Melkonian R."/>
            <person name="James E.K."/>
            <person name="Young J.P."/>
            <person name="Bena G."/>
            <person name="Hauser L."/>
            <person name="Land M."/>
            <person name="Kyrpides N."/>
            <person name="Bruce D."/>
            <person name="Chain P."/>
            <person name="Copeland A."/>
            <person name="Pitluck S."/>
            <person name="Woyke T."/>
            <person name="Lizotte-Waniewski M."/>
            <person name="Bristow J."/>
            <person name="Riley M."/>
        </authorList>
    </citation>
    <scope>NUCLEOTIDE SEQUENCE [LARGE SCALE GENOMIC DNA]</scope>
    <source>
        <strain>DSM 17167 / CIP 108236 / LMG 21445 / STM815</strain>
    </source>
</reference>
<feature type="chain" id="PRO_1000116705" description="Elongation factor Ts">
    <location>
        <begin position="1"/>
        <end position="293"/>
    </location>
</feature>
<feature type="region of interest" description="Involved in Mg(2+) ion dislocation from EF-Tu" evidence="1">
    <location>
        <begin position="80"/>
        <end position="83"/>
    </location>
</feature>
<accession>B2JIC5</accession>